<protein>
    <recommendedName>
        <fullName evidence="1">Small ribosomal subunit protein bS6</fullName>
    </recommendedName>
    <alternativeName>
        <fullName evidence="2">30S ribosomal protein S6</fullName>
    </alternativeName>
</protein>
<evidence type="ECO:0000255" key="1">
    <source>
        <dbReference type="HAMAP-Rule" id="MF_00360"/>
    </source>
</evidence>
<evidence type="ECO:0000305" key="2"/>
<reference key="1">
    <citation type="journal article" date="2016" name="Genome Announc.">
        <title>Complete genome sequence of Alkaliphilus metalliredigens strain QYMF, an alkaliphilic and metal-reducing bacterium isolated from borax-contaminated leachate ponds.</title>
        <authorList>
            <person name="Hwang C."/>
            <person name="Copeland A."/>
            <person name="Lucas S."/>
            <person name="Lapidus A."/>
            <person name="Barry K."/>
            <person name="Detter J.C."/>
            <person name="Glavina Del Rio T."/>
            <person name="Hammon N."/>
            <person name="Israni S."/>
            <person name="Dalin E."/>
            <person name="Tice H."/>
            <person name="Pitluck S."/>
            <person name="Chertkov O."/>
            <person name="Brettin T."/>
            <person name="Bruce D."/>
            <person name="Han C."/>
            <person name="Schmutz J."/>
            <person name="Larimer F."/>
            <person name="Land M.L."/>
            <person name="Hauser L."/>
            <person name="Kyrpides N."/>
            <person name="Mikhailova N."/>
            <person name="Ye Q."/>
            <person name="Zhou J."/>
            <person name="Richardson P."/>
            <person name="Fields M.W."/>
        </authorList>
    </citation>
    <scope>NUCLEOTIDE SEQUENCE [LARGE SCALE GENOMIC DNA]</scope>
    <source>
        <strain>QYMF</strain>
    </source>
</reference>
<feature type="chain" id="PRO_1000059852" description="Small ribosomal subunit protein bS6">
    <location>
        <begin position="1"/>
        <end position="94"/>
    </location>
</feature>
<name>RS6_ALKMQ</name>
<accession>A6TJA7</accession>
<dbReference type="EMBL" id="CP000724">
    <property type="protein sequence ID" value="ABR46275.1"/>
    <property type="molecule type" value="Genomic_DNA"/>
</dbReference>
<dbReference type="RefSeq" id="WP_011971184.1">
    <property type="nucleotide sequence ID" value="NC_009633.1"/>
</dbReference>
<dbReference type="SMR" id="A6TJA7"/>
<dbReference type="STRING" id="293826.Amet_0032"/>
<dbReference type="KEGG" id="amt:Amet_0032"/>
<dbReference type="eggNOG" id="COG0360">
    <property type="taxonomic scope" value="Bacteria"/>
</dbReference>
<dbReference type="HOGENOM" id="CLU_113441_5_1_9"/>
<dbReference type="OrthoDB" id="9812702at2"/>
<dbReference type="Proteomes" id="UP000001572">
    <property type="component" value="Chromosome"/>
</dbReference>
<dbReference type="GO" id="GO:0005737">
    <property type="term" value="C:cytoplasm"/>
    <property type="evidence" value="ECO:0007669"/>
    <property type="project" value="UniProtKB-ARBA"/>
</dbReference>
<dbReference type="GO" id="GO:1990904">
    <property type="term" value="C:ribonucleoprotein complex"/>
    <property type="evidence" value="ECO:0007669"/>
    <property type="project" value="UniProtKB-KW"/>
</dbReference>
<dbReference type="GO" id="GO:0005840">
    <property type="term" value="C:ribosome"/>
    <property type="evidence" value="ECO:0007669"/>
    <property type="project" value="UniProtKB-KW"/>
</dbReference>
<dbReference type="GO" id="GO:0070181">
    <property type="term" value="F:small ribosomal subunit rRNA binding"/>
    <property type="evidence" value="ECO:0007669"/>
    <property type="project" value="TreeGrafter"/>
</dbReference>
<dbReference type="GO" id="GO:0003735">
    <property type="term" value="F:structural constituent of ribosome"/>
    <property type="evidence" value="ECO:0007669"/>
    <property type="project" value="InterPro"/>
</dbReference>
<dbReference type="GO" id="GO:0006412">
    <property type="term" value="P:translation"/>
    <property type="evidence" value="ECO:0007669"/>
    <property type="project" value="UniProtKB-UniRule"/>
</dbReference>
<dbReference type="CDD" id="cd00473">
    <property type="entry name" value="bS6"/>
    <property type="match status" value="1"/>
</dbReference>
<dbReference type="Gene3D" id="3.30.70.60">
    <property type="match status" value="1"/>
</dbReference>
<dbReference type="HAMAP" id="MF_00360">
    <property type="entry name" value="Ribosomal_bS6"/>
    <property type="match status" value="1"/>
</dbReference>
<dbReference type="InterPro" id="IPR000529">
    <property type="entry name" value="Ribosomal_bS6"/>
</dbReference>
<dbReference type="InterPro" id="IPR035980">
    <property type="entry name" value="Ribosomal_bS6_sf"/>
</dbReference>
<dbReference type="InterPro" id="IPR020814">
    <property type="entry name" value="Ribosomal_S6_plastid/chlpt"/>
</dbReference>
<dbReference type="InterPro" id="IPR014717">
    <property type="entry name" value="Transl_elong_EF1B/ribsomal_bS6"/>
</dbReference>
<dbReference type="NCBIfam" id="TIGR00166">
    <property type="entry name" value="S6"/>
    <property type="match status" value="1"/>
</dbReference>
<dbReference type="PANTHER" id="PTHR21011">
    <property type="entry name" value="MITOCHONDRIAL 28S RIBOSOMAL PROTEIN S6"/>
    <property type="match status" value="1"/>
</dbReference>
<dbReference type="PANTHER" id="PTHR21011:SF1">
    <property type="entry name" value="SMALL RIBOSOMAL SUBUNIT PROTEIN BS6M"/>
    <property type="match status" value="1"/>
</dbReference>
<dbReference type="Pfam" id="PF01250">
    <property type="entry name" value="Ribosomal_S6"/>
    <property type="match status" value="1"/>
</dbReference>
<dbReference type="SUPFAM" id="SSF54995">
    <property type="entry name" value="Ribosomal protein S6"/>
    <property type="match status" value="1"/>
</dbReference>
<proteinExistence type="inferred from homology"/>
<sequence>MNKYELTYILKSETDEEKRNQLAEKFKGIIEADGAVENVDEWGNRKLAYEIDKRNEGYYVLVNFASSIDVPKELDRNLKIAEQVIRHMIIRIQE</sequence>
<keyword id="KW-1185">Reference proteome</keyword>
<keyword id="KW-0687">Ribonucleoprotein</keyword>
<keyword id="KW-0689">Ribosomal protein</keyword>
<keyword id="KW-0694">RNA-binding</keyword>
<keyword id="KW-0699">rRNA-binding</keyword>
<organism>
    <name type="scientific">Alkaliphilus metalliredigens (strain QYMF)</name>
    <dbReference type="NCBI Taxonomy" id="293826"/>
    <lineage>
        <taxon>Bacteria</taxon>
        <taxon>Bacillati</taxon>
        <taxon>Bacillota</taxon>
        <taxon>Clostridia</taxon>
        <taxon>Peptostreptococcales</taxon>
        <taxon>Natronincolaceae</taxon>
        <taxon>Alkaliphilus</taxon>
    </lineage>
</organism>
<gene>
    <name evidence="1" type="primary">rpsF</name>
    <name type="ordered locus">Amet_0032</name>
</gene>
<comment type="function">
    <text evidence="1">Binds together with bS18 to 16S ribosomal RNA.</text>
</comment>
<comment type="similarity">
    <text evidence="1">Belongs to the bacterial ribosomal protein bS6 family.</text>
</comment>